<dbReference type="EMBL" id="AM420293">
    <property type="protein sequence ID" value="CAM05111.1"/>
    <property type="molecule type" value="Genomic_DNA"/>
</dbReference>
<dbReference type="RefSeq" id="WP_009943771.1">
    <property type="nucleotide sequence ID" value="NC_009142.1"/>
</dbReference>
<dbReference type="SMR" id="A4FM36"/>
<dbReference type="STRING" id="405948.SACE_5928"/>
<dbReference type="KEGG" id="sen:SACE_5928"/>
<dbReference type="eggNOG" id="COG0779">
    <property type="taxonomic scope" value="Bacteria"/>
</dbReference>
<dbReference type="HOGENOM" id="CLU_070525_3_0_11"/>
<dbReference type="OrthoDB" id="9805006at2"/>
<dbReference type="Proteomes" id="UP000006728">
    <property type="component" value="Chromosome"/>
</dbReference>
<dbReference type="GO" id="GO:0005829">
    <property type="term" value="C:cytosol"/>
    <property type="evidence" value="ECO:0007669"/>
    <property type="project" value="TreeGrafter"/>
</dbReference>
<dbReference type="GO" id="GO:0000028">
    <property type="term" value="P:ribosomal small subunit assembly"/>
    <property type="evidence" value="ECO:0007669"/>
    <property type="project" value="TreeGrafter"/>
</dbReference>
<dbReference type="GO" id="GO:0006412">
    <property type="term" value="P:translation"/>
    <property type="evidence" value="ECO:0007669"/>
    <property type="project" value="TreeGrafter"/>
</dbReference>
<dbReference type="CDD" id="cd01734">
    <property type="entry name" value="YlxS_C"/>
    <property type="match status" value="1"/>
</dbReference>
<dbReference type="Gene3D" id="3.30.300.70">
    <property type="entry name" value="RimP-like superfamily, N-terminal"/>
    <property type="match status" value="1"/>
</dbReference>
<dbReference type="HAMAP" id="MF_01077">
    <property type="entry name" value="RimP"/>
    <property type="match status" value="1"/>
</dbReference>
<dbReference type="InterPro" id="IPR003728">
    <property type="entry name" value="Ribosome_maturation_RimP"/>
</dbReference>
<dbReference type="InterPro" id="IPR028998">
    <property type="entry name" value="RimP_C"/>
</dbReference>
<dbReference type="InterPro" id="IPR028989">
    <property type="entry name" value="RimP_N"/>
</dbReference>
<dbReference type="InterPro" id="IPR035956">
    <property type="entry name" value="RimP_N_sf"/>
</dbReference>
<dbReference type="NCBIfam" id="NF000930">
    <property type="entry name" value="PRK00092.2-2"/>
    <property type="match status" value="1"/>
</dbReference>
<dbReference type="PANTHER" id="PTHR33867">
    <property type="entry name" value="RIBOSOME MATURATION FACTOR RIMP"/>
    <property type="match status" value="1"/>
</dbReference>
<dbReference type="PANTHER" id="PTHR33867:SF1">
    <property type="entry name" value="RIBOSOME MATURATION FACTOR RIMP"/>
    <property type="match status" value="1"/>
</dbReference>
<dbReference type="Pfam" id="PF17384">
    <property type="entry name" value="DUF150_C"/>
    <property type="match status" value="1"/>
</dbReference>
<dbReference type="Pfam" id="PF02576">
    <property type="entry name" value="RimP_N"/>
    <property type="match status" value="1"/>
</dbReference>
<dbReference type="SUPFAM" id="SSF75420">
    <property type="entry name" value="YhbC-like, N-terminal domain"/>
    <property type="match status" value="1"/>
</dbReference>
<proteinExistence type="inferred from homology"/>
<organism>
    <name type="scientific">Saccharopolyspora erythraea (strain ATCC 11635 / DSM 40517 / JCM 4748 / NBRC 13426 / NCIMB 8594 / NRRL 2338)</name>
    <dbReference type="NCBI Taxonomy" id="405948"/>
    <lineage>
        <taxon>Bacteria</taxon>
        <taxon>Bacillati</taxon>
        <taxon>Actinomycetota</taxon>
        <taxon>Actinomycetes</taxon>
        <taxon>Pseudonocardiales</taxon>
        <taxon>Pseudonocardiaceae</taxon>
        <taxon>Saccharopolyspora</taxon>
    </lineage>
</organism>
<keyword id="KW-0963">Cytoplasm</keyword>
<keyword id="KW-1185">Reference proteome</keyword>
<keyword id="KW-0690">Ribosome biogenesis</keyword>
<feature type="chain" id="PRO_1000064765" description="Ribosome maturation factor RimP">
    <location>
        <begin position="1"/>
        <end position="185"/>
    </location>
</feature>
<feature type="region of interest" description="Disordered" evidence="2">
    <location>
        <begin position="162"/>
        <end position="185"/>
    </location>
</feature>
<evidence type="ECO:0000255" key="1">
    <source>
        <dbReference type="HAMAP-Rule" id="MF_01077"/>
    </source>
</evidence>
<evidence type="ECO:0000256" key="2">
    <source>
        <dbReference type="SAM" id="MobiDB-lite"/>
    </source>
</evidence>
<sequence length="185" mass="20255">MSSPPRGEVAARLEPVVAEAVSAAGFDLEELDVQQAGRRRLVKVVVDAEEGVGLDEISEISRAVSKVLDAHEHVLAGSYTLEVTSPGVDRPLTRPRHWRRARYRLVRVRLADGSDLVVRVGEADDEGVVVLADGEIRTLAYRDVERAVVEVEFQQPPAEDLVRLERAADGAPERGGDRGDTEESR</sequence>
<gene>
    <name evidence="1" type="primary">rimP</name>
    <name type="ordered locus">SACE_5928</name>
</gene>
<reference key="1">
    <citation type="journal article" date="2007" name="Nat. Biotechnol.">
        <title>Complete genome sequence of the erythromycin-producing bacterium Saccharopolyspora erythraea NRRL23338.</title>
        <authorList>
            <person name="Oliynyk M."/>
            <person name="Samborskyy M."/>
            <person name="Lester J.B."/>
            <person name="Mironenko T."/>
            <person name="Scott N."/>
            <person name="Dickens S."/>
            <person name="Haydock S.F."/>
            <person name="Leadlay P.F."/>
        </authorList>
    </citation>
    <scope>NUCLEOTIDE SEQUENCE [LARGE SCALE GENOMIC DNA]</scope>
    <source>
        <strain>ATCC 11635 / DSM 40517 / JCM 4748 / NBRC 13426 / NCIMB 8594 / NRRL 2338</strain>
    </source>
</reference>
<protein>
    <recommendedName>
        <fullName evidence="1">Ribosome maturation factor RimP</fullName>
    </recommendedName>
</protein>
<accession>A4FM36</accession>
<comment type="function">
    <text evidence="1">Required for maturation of 30S ribosomal subunits.</text>
</comment>
<comment type="subcellular location">
    <subcellularLocation>
        <location evidence="1">Cytoplasm</location>
    </subcellularLocation>
</comment>
<comment type="similarity">
    <text evidence="1">Belongs to the RimP family.</text>
</comment>
<name>RIMP_SACEN</name>